<dbReference type="EC" id="5.4.3.8" evidence="1"/>
<dbReference type="EMBL" id="AP006840">
    <property type="protein sequence ID" value="BAD41775.1"/>
    <property type="molecule type" value="Genomic_DNA"/>
</dbReference>
<dbReference type="RefSeq" id="WP_011196909.1">
    <property type="nucleotide sequence ID" value="NC_006177.1"/>
</dbReference>
<dbReference type="SMR" id="Q67KM3"/>
<dbReference type="STRING" id="292459.STH2790"/>
<dbReference type="KEGG" id="sth:STH2790"/>
<dbReference type="eggNOG" id="COG0001">
    <property type="taxonomic scope" value="Bacteria"/>
</dbReference>
<dbReference type="HOGENOM" id="CLU_016922_1_5_9"/>
<dbReference type="OrthoDB" id="9807885at2"/>
<dbReference type="UniPathway" id="UPA00251">
    <property type="reaction ID" value="UER00317"/>
</dbReference>
<dbReference type="Proteomes" id="UP000000417">
    <property type="component" value="Chromosome"/>
</dbReference>
<dbReference type="GO" id="GO:0005737">
    <property type="term" value="C:cytoplasm"/>
    <property type="evidence" value="ECO:0007669"/>
    <property type="project" value="UniProtKB-SubCell"/>
</dbReference>
<dbReference type="GO" id="GO:0042286">
    <property type="term" value="F:glutamate-1-semialdehyde 2,1-aminomutase activity"/>
    <property type="evidence" value="ECO:0007669"/>
    <property type="project" value="UniProtKB-UniRule"/>
</dbReference>
<dbReference type="GO" id="GO:0030170">
    <property type="term" value="F:pyridoxal phosphate binding"/>
    <property type="evidence" value="ECO:0007669"/>
    <property type="project" value="InterPro"/>
</dbReference>
<dbReference type="GO" id="GO:0008483">
    <property type="term" value="F:transaminase activity"/>
    <property type="evidence" value="ECO:0007669"/>
    <property type="project" value="InterPro"/>
</dbReference>
<dbReference type="GO" id="GO:0006782">
    <property type="term" value="P:protoporphyrinogen IX biosynthetic process"/>
    <property type="evidence" value="ECO:0007669"/>
    <property type="project" value="UniProtKB-UniRule"/>
</dbReference>
<dbReference type="CDD" id="cd00610">
    <property type="entry name" value="OAT_like"/>
    <property type="match status" value="1"/>
</dbReference>
<dbReference type="FunFam" id="3.40.640.10:FF:000021">
    <property type="entry name" value="Glutamate-1-semialdehyde 2,1-aminomutase"/>
    <property type="match status" value="1"/>
</dbReference>
<dbReference type="Gene3D" id="3.90.1150.10">
    <property type="entry name" value="Aspartate Aminotransferase, domain 1"/>
    <property type="match status" value="1"/>
</dbReference>
<dbReference type="Gene3D" id="3.40.640.10">
    <property type="entry name" value="Type I PLP-dependent aspartate aminotransferase-like (Major domain)"/>
    <property type="match status" value="1"/>
</dbReference>
<dbReference type="HAMAP" id="MF_00375">
    <property type="entry name" value="HemL_aminotrans_3"/>
    <property type="match status" value="1"/>
</dbReference>
<dbReference type="InterPro" id="IPR004639">
    <property type="entry name" value="4pyrrol_synth_GluAld_NH2Trfase"/>
</dbReference>
<dbReference type="InterPro" id="IPR005814">
    <property type="entry name" value="Aminotrans_3"/>
</dbReference>
<dbReference type="InterPro" id="IPR049704">
    <property type="entry name" value="Aminotrans_3_PPA_site"/>
</dbReference>
<dbReference type="InterPro" id="IPR015424">
    <property type="entry name" value="PyrdxlP-dep_Trfase"/>
</dbReference>
<dbReference type="InterPro" id="IPR015421">
    <property type="entry name" value="PyrdxlP-dep_Trfase_major"/>
</dbReference>
<dbReference type="InterPro" id="IPR015422">
    <property type="entry name" value="PyrdxlP-dep_Trfase_small"/>
</dbReference>
<dbReference type="NCBIfam" id="TIGR00713">
    <property type="entry name" value="hemL"/>
    <property type="match status" value="1"/>
</dbReference>
<dbReference type="NCBIfam" id="NF000818">
    <property type="entry name" value="PRK00062.1"/>
    <property type="match status" value="1"/>
</dbReference>
<dbReference type="NCBIfam" id="NF009055">
    <property type="entry name" value="PRK12389.1"/>
    <property type="match status" value="1"/>
</dbReference>
<dbReference type="PANTHER" id="PTHR43713">
    <property type="entry name" value="GLUTAMATE-1-SEMIALDEHYDE 2,1-AMINOMUTASE"/>
    <property type="match status" value="1"/>
</dbReference>
<dbReference type="PANTHER" id="PTHR43713:SF1">
    <property type="entry name" value="GLUTAMATE-1-SEMIALDEHYDE 2,1-AMINOMUTASE 2"/>
    <property type="match status" value="1"/>
</dbReference>
<dbReference type="Pfam" id="PF00202">
    <property type="entry name" value="Aminotran_3"/>
    <property type="match status" value="1"/>
</dbReference>
<dbReference type="SUPFAM" id="SSF53383">
    <property type="entry name" value="PLP-dependent transferases"/>
    <property type="match status" value="1"/>
</dbReference>
<dbReference type="PROSITE" id="PS00600">
    <property type="entry name" value="AA_TRANSFER_CLASS_3"/>
    <property type="match status" value="1"/>
</dbReference>
<name>GSA_SYMTH</name>
<protein>
    <recommendedName>
        <fullName evidence="1">Glutamate-1-semialdehyde 2,1-aminomutase</fullName>
        <shortName evidence="1">GSA</shortName>
        <ecNumber evidence="1">5.4.3.8</ecNumber>
    </recommendedName>
    <alternativeName>
        <fullName evidence="1">Glutamate-1-semialdehyde aminotransferase</fullName>
        <shortName evidence="1">GSA-AT</shortName>
    </alternativeName>
</protein>
<organism>
    <name type="scientific">Symbiobacterium thermophilum (strain DSM 24528 / JCM 14929 / IAM 14863 / T)</name>
    <dbReference type="NCBI Taxonomy" id="292459"/>
    <lineage>
        <taxon>Bacteria</taxon>
        <taxon>Bacillati</taxon>
        <taxon>Bacillota</taxon>
        <taxon>Clostridia</taxon>
        <taxon>Eubacteriales</taxon>
        <taxon>Symbiobacteriaceae</taxon>
        <taxon>Symbiobacterium</taxon>
    </lineage>
</organism>
<evidence type="ECO:0000255" key="1">
    <source>
        <dbReference type="HAMAP-Rule" id="MF_00375"/>
    </source>
</evidence>
<sequence>MTARYERSAALYERAVARIVGGVNSPARSFKSVGGGAPVFMARGQGPYLYDVDGNRYIDYIGAFGAGMFGHGHPELVAAVARAAEGGTIYGTPNPWEVELAERIHQALPSMERIRFVTTGTEAVMSAVRVARAFTGRPKIIKMEGCYHGHSDFALIAAGSGPSQLGTPDSAGVTEGVAQDVITVPYNDLDSLGEALDVWGPQVAAVLVEPIVGNFGVAMPKPGYLEGVKRLAHAHGALLIFDEVITGFRVAYGGAQTLLGIEPDLTTLGKIIGGGLPLAAYGGRAEIMDWVAPLGPAYQAGTLAGNPLCMQVALTGLEILSRPGVYERLDADAAYLADGLVRSARSHGHTVQLGRAGSMFTLFFCDEPVVDYRTAQRSDPAKFAAMFRGLLDRGIALAPSRFEAWMLTVQHTRADLEETLQIADEVFAQMAGQ</sequence>
<comment type="catalytic activity">
    <reaction evidence="1">
        <text>(S)-4-amino-5-oxopentanoate = 5-aminolevulinate</text>
        <dbReference type="Rhea" id="RHEA:14265"/>
        <dbReference type="ChEBI" id="CHEBI:57501"/>
        <dbReference type="ChEBI" id="CHEBI:356416"/>
        <dbReference type="EC" id="5.4.3.8"/>
    </reaction>
</comment>
<comment type="cofactor">
    <cofactor evidence="1">
        <name>pyridoxal 5'-phosphate</name>
        <dbReference type="ChEBI" id="CHEBI:597326"/>
    </cofactor>
</comment>
<comment type="pathway">
    <text evidence="1">Porphyrin-containing compound metabolism; protoporphyrin-IX biosynthesis; 5-aminolevulinate from L-glutamyl-tRNA(Glu): step 2/2.</text>
</comment>
<comment type="subunit">
    <text evidence="1">Homodimer.</text>
</comment>
<comment type="subcellular location">
    <subcellularLocation>
        <location evidence="1">Cytoplasm</location>
    </subcellularLocation>
</comment>
<comment type="similarity">
    <text evidence="1">Belongs to the class-III pyridoxal-phosphate-dependent aminotransferase family. HemL subfamily.</text>
</comment>
<accession>Q67KM3</accession>
<reference key="1">
    <citation type="journal article" date="2004" name="Nucleic Acids Res.">
        <title>Genome sequence of Symbiobacterium thermophilum, an uncultivable bacterium that depends on microbial commensalism.</title>
        <authorList>
            <person name="Ueda K."/>
            <person name="Yamashita A."/>
            <person name="Ishikawa J."/>
            <person name="Shimada M."/>
            <person name="Watsuji T."/>
            <person name="Morimura K."/>
            <person name="Ikeda H."/>
            <person name="Hattori M."/>
            <person name="Beppu T."/>
        </authorList>
    </citation>
    <scope>NUCLEOTIDE SEQUENCE [LARGE SCALE GENOMIC DNA]</scope>
    <source>
        <strain>DSM 24528 / JCM 14929 / IAM 14863 / T</strain>
    </source>
</reference>
<feature type="chain" id="PRO_0000243626" description="Glutamate-1-semialdehyde 2,1-aminomutase">
    <location>
        <begin position="1"/>
        <end position="433"/>
    </location>
</feature>
<feature type="modified residue" description="N6-(pyridoxal phosphate)lysine" evidence="1">
    <location>
        <position position="270"/>
    </location>
</feature>
<gene>
    <name evidence="1" type="primary">hemL</name>
    <name type="ordered locus">STH2790</name>
</gene>
<proteinExistence type="inferred from homology"/>
<keyword id="KW-0963">Cytoplasm</keyword>
<keyword id="KW-0413">Isomerase</keyword>
<keyword id="KW-0627">Porphyrin biosynthesis</keyword>
<keyword id="KW-0663">Pyridoxal phosphate</keyword>
<keyword id="KW-1185">Reference proteome</keyword>